<evidence type="ECO:0000250" key="1">
    <source>
        <dbReference type="UniProtKB" id="P47158"/>
    </source>
</evidence>
<evidence type="ECO:0000255" key="2"/>
<evidence type="ECO:0000305" key="3"/>
<keyword id="KW-0496">Mitochondrion</keyword>
<keyword id="KW-1185">Reference proteome</keyword>
<keyword id="KW-0809">Transit peptide</keyword>
<dbReference type="EMBL" id="CR382124">
    <property type="protein sequence ID" value="CAH00633.1"/>
    <property type="molecule type" value="Genomic_DNA"/>
</dbReference>
<dbReference type="RefSeq" id="XP_453537.1">
    <property type="nucleotide sequence ID" value="XM_453537.1"/>
</dbReference>
<dbReference type="FunCoup" id="Q6CRA2">
    <property type="interactions" value="330"/>
</dbReference>
<dbReference type="STRING" id="284590.Q6CRA2"/>
<dbReference type="PaxDb" id="284590-Q6CRA2"/>
<dbReference type="KEGG" id="kla:KLLA0_D10681g"/>
<dbReference type="eggNOG" id="KOG2929">
    <property type="taxonomic scope" value="Eukaryota"/>
</dbReference>
<dbReference type="HOGENOM" id="CLU_007884_7_3_1"/>
<dbReference type="InParanoid" id="Q6CRA2"/>
<dbReference type="OMA" id="PFECNLD"/>
<dbReference type="Proteomes" id="UP000000598">
    <property type="component" value="Chromosome D"/>
</dbReference>
<dbReference type="GO" id="GO:0005759">
    <property type="term" value="C:mitochondrial matrix"/>
    <property type="evidence" value="ECO:0007669"/>
    <property type="project" value="TreeGrafter"/>
</dbReference>
<dbReference type="GO" id="GO:0016740">
    <property type="term" value="F:transferase activity"/>
    <property type="evidence" value="ECO:0007669"/>
    <property type="project" value="UniProtKB-KW"/>
</dbReference>
<dbReference type="GO" id="GO:0016226">
    <property type="term" value="P:iron-sulfur cluster assembly"/>
    <property type="evidence" value="ECO:0007669"/>
    <property type="project" value="TreeGrafter"/>
</dbReference>
<dbReference type="Gene3D" id="3.30.1360.120">
    <property type="entry name" value="Probable tRNA modification gtpase trme, domain 1"/>
    <property type="match status" value="1"/>
</dbReference>
<dbReference type="InterPro" id="IPR027266">
    <property type="entry name" value="TrmE/GcvT_dom1"/>
</dbReference>
<dbReference type="InterPro" id="IPR045179">
    <property type="entry name" value="YgfZ/GcvT"/>
</dbReference>
<dbReference type="InterPro" id="IPR017703">
    <property type="entry name" value="YgfZ/GcvT_CS"/>
</dbReference>
<dbReference type="NCBIfam" id="TIGR03317">
    <property type="entry name" value="ygfZ_signature"/>
    <property type="match status" value="1"/>
</dbReference>
<dbReference type="PANTHER" id="PTHR22602">
    <property type="entry name" value="TRANSFERASE CAF17, MITOCHONDRIAL-RELATED"/>
    <property type="match status" value="1"/>
</dbReference>
<dbReference type="PANTHER" id="PTHR22602:SF0">
    <property type="entry name" value="TRANSFERASE CAF17, MITOCHONDRIAL-RELATED"/>
    <property type="match status" value="1"/>
</dbReference>
<dbReference type="SUPFAM" id="SSF103025">
    <property type="entry name" value="Folate-binding domain"/>
    <property type="match status" value="1"/>
</dbReference>
<protein>
    <recommendedName>
        <fullName>Iron-sulfur cluster assembly factor IBA57 homolog, mitochondrial</fullName>
    </recommendedName>
</protein>
<organism>
    <name type="scientific">Kluyveromyces lactis (strain ATCC 8585 / CBS 2359 / DSM 70799 / NBRC 1267 / NRRL Y-1140 / WM37)</name>
    <name type="common">Yeast</name>
    <name type="synonym">Candida sphaerica</name>
    <dbReference type="NCBI Taxonomy" id="284590"/>
    <lineage>
        <taxon>Eukaryota</taxon>
        <taxon>Fungi</taxon>
        <taxon>Dikarya</taxon>
        <taxon>Ascomycota</taxon>
        <taxon>Saccharomycotina</taxon>
        <taxon>Saccharomycetes</taxon>
        <taxon>Saccharomycetales</taxon>
        <taxon>Saccharomycetaceae</taxon>
        <taxon>Kluyveromyces</taxon>
    </lineage>
</organism>
<feature type="transit peptide" description="Mitochondrion" evidence="2">
    <location>
        <begin position="1"/>
        <end position="15"/>
    </location>
</feature>
<feature type="chain" id="PRO_0000301700" description="Iron-sulfur cluster assembly factor IBA57 homolog, mitochondrial">
    <location>
        <begin position="16"/>
        <end position="462"/>
    </location>
</feature>
<proteinExistence type="inferred from homology"/>
<comment type="subcellular location">
    <subcellularLocation>
        <location evidence="1">Mitochondrion matrix</location>
    </subcellularLocation>
</comment>
<comment type="similarity">
    <text evidence="3">Belongs to the GcvT family. CAF17/IBA57 subfamily.</text>
</comment>
<name>CAF17_KLULA</name>
<sequence>MRSFLRYFSSVKEATQFRFESCRVENKSYIRLLGPDSIKFLNGLVTSKLQPNFVKKNLTTISTKEQEKNNTLSSLNFSKYNWGIYKECTRLEDHISRFGTYTGFLNMKGKLLTDSIIYPYPFTLKSIQDKKFPEYLMEFDSHIAQKMERTLDNHKLLSKVKFKHVQNEELRTWDAYITMPEEYQLLENLLNPMQEMKDGEQALHFANFFASMFFQGNEHKLKAVYFDTRLIDDMYEGKIKPMFRIVTDNSVSDINDIFNCTAFGENPFEKANISATEIQKERFKFGLFDGNHEYIPETLLALEANFDYFEDSINSDKGCYVGQELTARTFATGVLKKRCVGITIDEPQKLADWDHSKYLSIFSKLELQVQNQDTQAAINPFGSLSKPVKKRTRPAGQLINYNGNIGVAVVRKDYIYHALKHHHDIDAYVELPNKETVACSIKLEWLDRFLEETEAEEVEQEQ</sequence>
<reference key="1">
    <citation type="journal article" date="2004" name="Nature">
        <title>Genome evolution in yeasts.</title>
        <authorList>
            <person name="Dujon B."/>
            <person name="Sherman D."/>
            <person name="Fischer G."/>
            <person name="Durrens P."/>
            <person name="Casaregola S."/>
            <person name="Lafontaine I."/>
            <person name="de Montigny J."/>
            <person name="Marck C."/>
            <person name="Neuveglise C."/>
            <person name="Talla E."/>
            <person name="Goffard N."/>
            <person name="Frangeul L."/>
            <person name="Aigle M."/>
            <person name="Anthouard V."/>
            <person name="Babour A."/>
            <person name="Barbe V."/>
            <person name="Barnay S."/>
            <person name="Blanchin S."/>
            <person name="Beckerich J.-M."/>
            <person name="Beyne E."/>
            <person name="Bleykasten C."/>
            <person name="Boisrame A."/>
            <person name="Boyer J."/>
            <person name="Cattolico L."/>
            <person name="Confanioleri F."/>
            <person name="de Daruvar A."/>
            <person name="Despons L."/>
            <person name="Fabre E."/>
            <person name="Fairhead C."/>
            <person name="Ferry-Dumazet H."/>
            <person name="Groppi A."/>
            <person name="Hantraye F."/>
            <person name="Hennequin C."/>
            <person name="Jauniaux N."/>
            <person name="Joyet P."/>
            <person name="Kachouri R."/>
            <person name="Kerrest A."/>
            <person name="Koszul R."/>
            <person name="Lemaire M."/>
            <person name="Lesur I."/>
            <person name="Ma L."/>
            <person name="Muller H."/>
            <person name="Nicaud J.-M."/>
            <person name="Nikolski M."/>
            <person name="Oztas S."/>
            <person name="Ozier-Kalogeropoulos O."/>
            <person name="Pellenz S."/>
            <person name="Potier S."/>
            <person name="Richard G.-F."/>
            <person name="Straub M.-L."/>
            <person name="Suleau A."/>
            <person name="Swennen D."/>
            <person name="Tekaia F."/>
            <person name="Wesolowski-Louvel M."/>
            <person name="Westhof E."/>
            <person name="Wirth B."/>
            <person name="Zeniou-Meyer M."/>
            <person name="Zivanovic Y."/>
            <person name="Bolotin-Fukuhara M."/>
            <person name="Thierry A."/>
            <person name="Bouchier C."/>
            <person name="Caudron B."/>
            <person name="Scarpelli C."/>
            <person name="Gaillardin C."/>
            <person name="Weissenbach J."/>
            <person name="Wincker P."/>
            <person name="Souciet J.-L."/>
        </authorList>
    </citation>
    <scope>NUCLEOTIDE SEQUENCE [LARGE SCALE GENOMIC DNA]</scope>
    <source>
        <strain>ATCC 8585 / CBS 2359 / DSM 70799 / NBRC 1267 / NRRL Y-1140 / WM37</strain>
    </source>
</reference>
<accession>Q6CRA2</accession>
<gene>
    <name type="primary">CAF17</name>
    <name type="ordered locus">KLLA0D10681g</name>
</gene>